<reference key="1">
    <citation type="journal article" date="2008" name="Genome Res.">
        <title>Chlamydia trachomatis: genome sequence analysis of lymphogranuloma venereum isolates.</title>
        <authorList>
            <person name="Thomson N.R."/>
            <person name="Holden M.T.G."/>
            <person name="Carder C."/>
            <person name="Lennard N."/>
            <person name="Lockey S.J."/>
            <person name="Marsh P."/>
            <person name="Skipp P."/>
            <person name="O'Connor C.D."/>
            <person name="Goodhead I."/>
            <person name="Norbertzcak H."/>
            <person name="Harris B."/>
            <person name="Ormond D."/>
            <person name="Rance R."/>
            <person name="Quail M.A."/>
            <person name="Parkhill J."/>
            <person name="Stephens R.S."/>
            <person name="Clarke I.N."/>
        </authorList>
    </citation>
    <scope>NUCLEOTIDE SEQUENCE [LARGE SCALE GENOMIC DNA]</scope>
    <source>
        <strain>ATCC VR-902B / DSM 19102 / 434/Bu</strain>
    </source>
</reference>
<gene>
    <name evidence="1" type="primary">ispG</name>
    <name type="ordered locus">CTL0313</name>
</gene>
<name>ISPG_CHLT2</name>
<comment type="function">
    <text evidence="1">Converts 2C-methyl-D-erythritol 2,4-cyclodiphosphate (ME-2,4cPP) into 1-hydroxy-2-methyl-2-(E)-butenyl 4-diphosphate.</text>
</comment>
<comment type="catalytic activity">
    <reaction evidence="1">
        <text>(2E)-4-hydroxy-3-methylbut-2-enyl diphosphate + oxidized [flavodoxin] + H2O + 2 H(+) = 2-C-methyl-D-erythritol 2,4-cyclic diphosphate + reduced [flavodoxin]</text>
        <dbReference type="Rhea" id="RHEA:43604"/>
        <dbReference type="Rhea" id="RHEA-COMP:10622"/>
        <dbReference type="Rhea" id="RHEA-COMP:10623"/>
        <dbReference type="ChEBI" id="CHEBI:15377"/>
        <dbReference type="ChEBI" id="CHEBI:15378"/>
        <dbReference type="ChEBI" id="CHEBI:57618"/>
        <dbReference type="ChEBI" id="CHEBI:58210"/>
        <dbReference type="ChEBI" id="CHEBI:58483"/>
        <dbReference type="ChEBI" id="CHEBI:128753"/>
        <dbReference type="EC" id="1.17.7.3"/>
    </reaction>
</comment>
<comment type="cofactor">
    <cofactor evidence="1">
        <name>[4Fe-4S] cluster</name>
        <dbReference type="ChEBI" id="CHEBI:49883"/>
    </cofactor>
    <text evidence="1">Binds 1 [4Fe-4S] cluster.</text>
</comment>
<comment type="pathway">
    <text evidence="1">Isoprenoid biosynthesis; isopentenyl diphosphate biosynthesis via DXP pathway; isopentenyl diphosphate from 1-deoxy-D-xylulose 5-phosphate: step 5/6.</text>
</comment>
<comment type="similarity">
    <text evidence="1">Belongs to the IspG family.</text>
</comment>
<protein>
    <recommendedName>
        <fullName evidence="1">4-hydroxy-3-methylbut-2-en-1-yl diphosphate synthase (flavodoxin)</fullName>
        <ecNumber evidence="1">1.17.7.3</ecNumber>
    </recommendedName>
    <alternativeName>
        <fullName evidence="1">1-hydroxy-2-methyl-2-(E)-butenyl 4-diphosphate synthase</fullName>
    </alternativeName>
</protein>
<evidence type="ECO:0000255" key="1">
    <source>
        <dbReference type="HAMAP-Rule" id="MF_00159"/>
    </source>
</evidence>
<sequence>MATPCIQNAFRRKTLPVRIGDLFVGSEHSIKIQSMTTTATTDVDGTVRQICALQELGCDIVRVTVQGLREVHACEHIKDRLIQQNISIPLVADIHFFPQAAIHVVDCVDKVRINPGNYVDKRNMFTGKIYSDEQYAHSLEHLMNKFSPLVEKCKRLGKAMRIGVNHGSLSERVTQRYGNTIEGMVYSALEYAEVCVAMDYHDVIFSMKSSNPKVMVAAYRSLAYELDQREWSYPLHLGVTEAGSGTAGIVKSAVGIGTLLSEGLGDTIRCSLTGSPINEIPICIDLLKQTTELSERWGEADNPFAIHSSKQLGTRNTLNTPPWDNVYGLLINLTDVQLLTAEPIELLQCLGIDTTTGKIDPTTPEGVVVPKAMRSSPIVSEIEKHLLVFNKEDAPILNPMNEEEWLSEETLSAPFVYFEVTDIHTARRFFSLRQHSTQPVCLSFSLDPHLSKNEAIIDLSARLGALLLDGLGSCVLLDFVDIKLSRTLGFLILQSANIRSVTVEYVSCPGCGRTLFDLLAVSQRIRERTKHLPGGLKIAVMGCIVNGPGEMADADFGYVGSKPGMIDLYVKHKCVKSCIPIENAEEELVQLLKEHGVWKEPE</sequence>
<proteinExistence type="inferred from homology"/>
<accession>B0B9G5</accession>
<dbReference type="EC" id="1.17.7.3" evidence="1"/>
<dbReference type="EMBL" id="AM884176">
    <property type="protein sequence ID" value="CAP03752.1"/>
    <property type="molecule type" value="Genomic_DNA"/>
</dbReference>
<dbReference type="RefSeq" id="WP_009873526.1">
    <property type="nucleotide sequence ID" value="NC_010287.1"/>
</dbReference>
<dbReference type="RefSeq" id="YP_001654396.1">
    <property type="nucleotide sequence ID" value="NC_010287.1"/>
</dbReference>
<dbReference type="KEGG" id="ctb:CTL0313"/>
<dbReference type="PATRIC" id="fig|471472.4.peg.339"/>
<dbReference type="HOGENOM" id="CLU_012689_0_0_0"/>
<dbReference type="UniPathway" id="UPA00056">
    <property type="reaction ID" value="UER00096"/>
</dbReference>
<dbReference type="Proteomes" id="UP001154402">
    <property type="component" value="Chromosome"/>
</dbReference>
<dbReference type="GO" id="GO:0051539">
    <property type="term" value="F:4 iron, 4 sulfur cluster binding"/>
    <property type="evidence" value="ECO:0007669"/>
    <property type="project" value="UniProtKB-UniRule"/>
</dbReference>
<dbReference type="GO" id="GO:0046429">
    <property type="term" value="F:4-hydroxy-3-methylbut-2-en-1-yl diphosphate synthase activity (ferredoxin)"/>
    <property type="evidence" value="ECO:0007669"/>
    <property type="project" value="UniProtKB-UniRule"/>
</dbReference>
<dbReference type="GO" id="GO:0141197">
    <property type="term" value="F:4-hydroxy-3-methylbut-2-enyl-diphosphate synthase activity (flavodoxin)"/>
    <property type="evidence" value="ECO:0007669"/>
    <property type="project" value="UniProtKB-EC"/>
</dbReference>
<dbReference type="GO" id="GO:0005506">
    <property type="term" value="F:iron ion binding"/>
    <property type="evidence" value="ECO:0007669"/>
    <property type="project" value="InterPro"/>
</dbReference>
<dbReference type="GO" id="GO:0019288">
    <property type="term" value="P:isopentenyl diphosphate biosynthetic process, methylerythritol 4-phosphate pathway"/>
    <property type="evidence" value="ECO:0007669"/>
    <property type="project" value="UniProtKB-UniRule"/>
</dbReference>
<dbReference type="GO" id="GO:0016114">
    <property type="term" value="P:terpenoid biosynthetic process"/>
    <property type="evidence" value="ECO:0007669"/>
    <property type="project" value="InterPro"/>
</dbReference>
<dbReference type="FunFam" id="3.20.20.20:FF:000005">
    <property type="entry name" value="4-hydroxy-3-methylbut-2-en-1-yl diphosphate synthase (flavodoxin)"/>
    <property type="match status" value="1"/>
</dbReference>
<dbReference type="FunFam" id="3.30.413.10:FF:000006">
    <property type="entry name" value="4-hydroxy-3-methylbut-2-en-1-yl diphosphate synthase (flavodoxin)"/>
    <property type="match status" value="1"/>
</dbReference>
<dbReference type="Gene3D" id="3.20.20.20">
    <property type="entry name" value="Dihydropteroate synthase-like"/>
    <property type="match status" value="1"/>
</dbReference>
<dbReference type="Gene3D" id="3.30.413.10">
    <property type="entry name" value="Sulfite Reductase Hemoprotein, domain 1"/>
    <property type="match status" value="1"/>
</dbReference>
<dbReference type="HAMAP" id="MF_00159">
    <property type="entry name" value="IspG"/>
    <property type="match status" value="1"/>
</dbReference>
<dbReference type="InterPro" id="IPR011005">
    <property type="entry name" value="Dihydropteroate_synth-like_sf"/>
</dbReference>
<dbReference type="InterPro" id="IPR017178">
    <property type="entry name" value="IspG_atypical"/>
</dbReference>
<dbReference type="InterPro" id="IPR004588">
    <property type="entry name" value="IspG_bac-typ"/>
</dbReference>
<dbReference type="InterPro" id="IPR045854">
    <property type="entry name" value="NO2/SO3_Rdtase_4Fe4S_sf"/>
</dbReference>
<dbReference type="NCBIfam" id="TIGR00612">
    <property type="entry name" value="ispG_gcpE"/>
    <property type="match status" value="1"/>
</dbReference>
<dbReference type="NCBIfam" id="NF001912">
    <property type="entry name" value="PRK00694.1"/>
    <property type="match status" value="1"/>
</dbReference>
<dbReference type="PANTHER" id="PTHR30454">
    <property type="entry name" value="4-HYDROXY-3-METHYLBUT-2-EN-1-YL DIPHOSPHATE SYNTHASE"/>
    <property type="match status" value="1"/>
</dbReference>
<dbReference type="PANTHER" id="PTHR30454:SF0">
    <property type="entry name" value="4-HYDROXY-3-METHYLBUT-2-EN-1-YL DIPHOSPHATE SYNTHASE (FERREDOXIN), CHLOROPLASTIC"/>
    <property type="match status" value="1"/>
</dbReference>
<dbReference type="Pfam" id="PF04551">
    <property type="entry name" value="GcpE"/>
    <property type="match status" value="2"/>
</dbReference>
<dbReference type="PIRSF" id="PIRSF037336">
    <property type="entry name" value="IspG_like"/>
    <property type="match status" value="1"/>
</dbReference>
<dbReference type="SUPFAM" id="SSF56014">
    <property type="entry name" value="Nitrite and sulphite reductase 4Fe-4S domain-like"/>
    <property type="match status" value="1"/>
</dbReference>
<feature type="chain" id="PRO_1000097154" description="4-hydroxy-3-methylbut-2-en-1-yl diphosphate synthase (flavodoxin)">
    <location>
        <begin position="1"/>
        <end position="602"/>
    </location>
</feature>
<feature type="binding site" evidence="1">
    <location>
        <position position="508"/>
    </location>
    <ligand>
        <name>[4Fe-4S] cluster</name>
        <dbReference type="ChEBI" id="CHEBI:49883"/>
    </ligand>
</feature>
<feature type="binding site" evidence="1">
    <location>
        <position position="511"/>
    </location>
    <ligand>
        <name>[4Fe-4S] cluster</name>
        <dbReference type="ChEBI" id="CHEBI:49883"/>
    </ligand>
</feature>
<feature type="binding site" evidence="1">
    <location>
        <position position="543"/>
    </location>
    <ligand>
        <name>[4Fe-4S] cluster</name>
        <dbReference type="ChEBI" id="CHEBI:49883"/>
    </ligand>
</feature>
<feature type="binding site" evidence="1">
    <location>
        <position position="550"/>
    </location>
    <ligand>
        <name>[4Fe-4S] cluster</name>
        <dbReference type="ChEBI" id="CHEBI:49883"/>
    </ligand>
</feature>
<organism>
    <name type="scientific">Chlamydia trachomatis serovar L2 (strain ATCC VR-902B / DSM 19102 / 434/Bu)</name>
    <dbReference type="NCBI Taxonomy" id="471472"/>
    <lineage>
        <taxon>Bacteria</taxon>
        <taxon>Pseudomonadati</taxon>
        <taxon>Chlamydiota</taxon>
        <taxon>Chlamydiia</taxon>
        <taxon>Chlamydiales</taxon>
        <taxon>Chlamydiaceae</taxon>
        <taxon>Chlamydia/Chlamydophila group</taxon>
        <taxon>Chlamydia</taxon>
    </lineage>
</organism>
<keyword id="KW-0004">4Fe-4S</keyword>
<keyword id="KW-0408">Iron</keyword>
<keyword id="KW-0411">Iron-sulfur</keyword>
<keyword id="KW-0414">Isoprene biosynthesis</keyword>
<keyword id="KW-0479">Metal-binding</keyword>
<keyword id="KW-0560">Oxidoreductase</keyword>